<dbReference type="EC" id="5.2.1.8"/>
<dbReference type="EMBL" id="X69655">
    <property type="protein sequence ID" value="CAA49346.1"/>
    <property type="molecule type" value="Genomic_DNA"/>
</dbReference>
<dbReference type="PIR" id="S55332">
    <property type="entry name" value="S55332"/>
</dbReference>
<dbReference type="PDB" id="1JVW">
    <property type="method" value="X-ray"/>
    <property type="resolution" value="1.70 A"/>
    <property type="chains" value="A=30-196"/>
</dbReference>
<dbReference type="PDB" id="8BK4">
    <property type="method" value="X-ray"/>
    <property type="resolution" value="1.34 A"/>
    <property type="chains" value="A=32-194"/>
</dbReference>
<dbReference type="PDB" id="8P3D">
    <property type="method" value="X-ray"/>
    <property type="resolution" value="1.71 A"/>
    <property type="chains" value="A=34-195"/>
</dbReference>
<dbReference type="PDB" id="8P42">
    <property type="method" value="X-ray"/>
    <property type="resolution" value="2.64 A"/>
    <property type="chains" value="A/D=32-192"/>
</dbReference>
<dbReference type="PDBsum" id="1JVW"/>
<dbReference type="PDBsum" id="8BK4"/>
<dbReference type="PDBsum" id="8P3D"/>
<dbReference type="PDBsum" id="8P42"/>
<dbReference type="SMR" id="Q09734"/>
<dbReference type="VEuPathDB" id="TriTrypDB:BCY84_18529"/>
<dbReference type="VEuPathDB" id="TriTrypDB:C3747_2g288"/>
<dbReference type="VEuPathDB" id="TriTrypDB:C4B63_4g508"/>
<dbReference type="VEuPathDB" id="TriTrypDB:TcBrA4_0086400"/>
<dbReference type="VEuPathDB" id="TriTrypDB:TcCL_NonESM01613"/>
<dbReference type="VEuPathDB" id="TriTrypDB:TcCLB.508323.84"/>
<dbReference type="VEuPathDB" id="TriTrypDB:TcCLB.508897.110"/>
<dbReference type="VEuPathDB" id="TriTrypDB:TcG_00148"/>
<dbReference type="VEuPathDB" id="TriTrypDB:TcYC6_0113560"/>
<dbReference type="EvolutionaryTrace" id="Q09734"/>
<dbReference type="GO" id="GO:0005576">
    <property type="term" value="C:extracellular region"/>
    <property type="evidence" value="ECO:0007669"/>
    <property type="project" value="UniProtKB-SubCell"/>
</dbReference>
<dbReference type="GO" id="GO:0003755">
    <property type="term" value="F:peptidyl-prolyl cis-trans isomerase activity"/>
    <property type="evidence" value="ECO:0007669"/>
    <property type="project" value="UniProtKB-KW"/>
</dbReference>
<dbReference type="FunFam" id="3.10.50.40:FF:000045">
    <property type="entry name" value="Peptidyl-prolyl cis-trans isomerase"/>
    <property type="match status" value="1"/>
</dbReference>
<dbReference type="Gene3D" id="3.10.50.40">
    <property type="match status" value="1"/>
</dbReference>
<dbReference type="InterPro" id="IPR046357">
    <property type="entry name" value="PPIase_dom_sf"/>
</dbReference>
<dbReference type="InterPro" id="IPR001179">
    <property type="entry name" value="PPIase_FKBP_dom"/>
</dbReference>
<dbReference type="PANTHER" id="PTHR43811:SF19">
    <property type="entry name" value="39 KDA FK506-BINDING NUCLEAR PROTEIN"/>
    <property type="match status" value="1"/>
</dbReference>
<dbReference type="PANTHER" id="PTHR43811">
    <property type="entry name" value="FKBP-TYPE PEPTIDYL-PROLYL CIS-TRANS ISOMERASE FKPA"/>
    <property type="match status" value="1"/>
</dbReference>
<dbReference type="Pfam" id="PF00254">
    <property type="entry name" value="FKBP_C"/>
    <property type="match status" value="1"/>
</dbReference>
<dbReference type="SUPFAM" id="SSF54534">
    <property type="entry name" value="FKBP-like"/>
    <property type="match status" value="1"/>
</dbReference>
<dbReference type="PROSITE" id="PS50059">
    <property type="entry name" value="FKBP_PPIASE"/>
    <property type="match status" value="1"/>
</dbReference>
<feature type="signal peptide" evidence="1">
    <location>
        <begin position="1"/>
        <end position="29"/>
    </location>
</feature>
<feature type="chain" id="PRO_0000025535" description="Macrophage infectivity potentiator">
    <location>
        <begin position="30"/>
        <end position="196"/>
    </location>
</feature>
<feature type="domain" description="PPIase FKBP-type" evidence="2">
    <location>
        <begin position="85"/>
        <end position="171"/>
    </location>
</feature>
<feature type="helix" evidence="5">
    <location>
        <begin position="33"/>
        <end position="57"/>
    </location>
</feature>
<feature type="strand" evidence="4">
    <location>
        <begin position="61"/>
        <end position="63"/>
    </location>
</feature>
<feature type="strand" evidence="5">
    <location>
        <begin position="69"/>
        <end position="74"/>
    </location>
</feature>
<feature type="strand" evidence="5">
    <location>
        <begin position="88"/>
        <end position="95"/>
    </location>
</feature>
<feature type="strand" evidence="5">
    <location>
        <begin position="101"/>
        <end position="104"/>
    </location>
</feature>
<feature type="helix" evidence="5">
    <location>
        <begin position="105"/>
        <end position="108"/>
    </location>
</feature>
<feature type="strand" evidence="4">
    <location>
        <begin position="112"/>
        <end position="114"/>
    </location>
</feature>
<feature type="helix" evidence="5">
    <location>
        <begin position="116"/>
        <end position="118"/>
    </location>
</feature>
<feature type="helix" evidence="5">
    <location>
        <begin position="121"/>
        <end position="127"/>
    </location>
</feature>
<feature type="strand" evidence="5">
    <location>
        <begin position="135"/>
        <end position="140"/>
    </location>
</feature>
<feature type="helix" evidence="5">
    <location>
        <begin position="142"/>
        <end position="144"/>
    </location>
</feature>
<feature type="turn" evidence="5">
    <location>
        <begin position="145"/>
        <end position="149"/>
    </location>
</feature>
<feature type="turn" evidence="5">
    <location>
        <begin position="152"/>
        <end position="154"/>
    </location>
</feature>
<feature type="strand" evidence="5">
    <location>
        <begin position="161"/>
        <end position="170"/>
    </location>
</feature>
<feature type="helix" evidence="5">
    <location>
        <begin position="171"/>
        <end position="173"/>
    </location>
</feature>
<feature type="helix" evidence="5">
    <location>
        <begin position="179"/>
        <end position="191"/>
    </location>
</feature>
<feature type="turn" evidence="6">
    <location>
        <begin position="192"/>
        <end position="194"/>
    </location>
</feature>
<keyword id="KW-0002">3D-structure</keyword>
<keyword id="KW-0413">Isomerase</keyword>
<keyword id="KW-0697">Rotamase</keyword>
<keyword id="KW-0964">Secreted</keyword>
<keyword id="KW-0732">Signal</keyword>
<keyword id="KW-0843">Virulence</keyword>
<reference key="1">
    <citation type="journal article" date="1995" name="EMBO J.">
        <title>Secretion by Trypanosoma cruzi of a peptidyl-prolyl cis-trans isomerase involved in cell infection.</title>
        <authorList>
            <person name="Moro A."/>
            <person name="Ruiz-Cabello F."/>
            <person name="Fernandez-Cano A."/>
            <person name="Stock R.P."/>
            <person name="Gonzalez A."/>
        </authorList>
    </citation>
    <scope>NUCLEOTIDE SEQUENCE [GENOMIC DNA]</scope>
    <source>
        <strain>Y</strain>
    </source>
</reference>
<comment type="function">
    <text>Essential virulence factor associated with macrophage infectivity. Exhibits PPIase activity.</text>
</comment>
<comment type="catalytic activity">
    <reaction>
        <text>[protein]-peptidylproline (omega=180) = [protein]-peptidylproline (omega=0)</text>
        <dbReference type="Rhea" id="RHEA:16237"/>
        <dbReference type="Rhea" id="RHEA-COMP:10747"/>
        <dbReference type="Rhea" id="RHEA-COMP:10748"/>
        <dbReference type="ChEBI" id="CHEBI:83833"/>
        <dbReference type="ChEBI" id="CHEBI:83834"/>
        <dbReference type="EC" id="5.2.1.8"/>
    </reaction>
</comment>
<comment type="activity regulation">
    <text>Strongly inhibited by FK506 and L-685,818.</text>
</comment>
<comment type="subcellular location">
    <subcellularLocation>
        <location>Secreted</location>
        <location>Extracellular space</location>
    </subcellularLocation>
</comment>
<comment type="similarity">
    <text evidence="3">Belongs to the FKBP-type PPIase family.</text>
</comment>
<sequence>MHRENYFSKIAFCLLGVLFLSCITSVQTVSGDAASHEERMNNYRKRVGRLFMEQKAAQPDAVKLPSGLVFQRIARGSGKRAPAIDDKCEVHYTGRLRDGTVFDSSRERGKPTTFRPNEVIKGWTEALQLMREGDRWRLFIPYDLAYGVTGGGGMIPPYSPLEFDVELISIKDGGKGRTAEEVDEILRKAEEDREDM</sequence>
<organism>
    <name type="scientific">Trypanosoma cruzi</name>
    <dbReference type="NCBI Taxonomy" id="5693"/>
    <lineage>
        <taxon>Eukaryota</taxon>
        <taxon>Discoba</taxon>
        <taxon>Euglenozoa</taxon>
        <taxon>Kinetoplastea</taxon>
        <taxon>Metakinetoplastina</taxon>
        <taxon>Trypanosomatida</taxon>
        <taxon>Trypanosomatidae</taxon>
        <taxon>Trypanosoma</taxon>
        <taxon>Schizotrypanum</taxon>
    </lineage>
</organism>
<evidence type="ECO:0000255" key="1"/>
<evidence type="ECO:0000255" key="2">
    <source>
        <dbReference type="PROSITE-ProRule" id="PRU00277"/>
    </source>
</evidence>
<evidence type="ECO:0000305" key="3"/>
<evidence type="ECO:0007829" key="4">
    <source>
        <dbReference type="PDB" id="1JVW"/>
    </source>
</evidence>
<evidence type="ECO:0007829" key="5">
    <source>
        <dbReference type="PDB" id="8BK4"/>
    </source>
</evidence>
<evidence type="ECO:0007829" key="6">
    <source>
        <dbReference type="PDB" id="8P3D"/>
    </source>
</evidence>
<accession>Q09734</accession>
<gene>
    <name type="primary">MIP</name>
</gene>
<name>MIP_TRYCR</name>
<protein>
    <recommendedName>
        <fullName>Macrophage infectivity potentiator</fullName>
        <ecNumber>5.2.1.8</ecNumber>
    </recommendedName>
    <alternativeName>
        <fullName>Peptidyl-prolyl cis-trans isomerase</fullName>
        <shortName>PPIase</shortName>
    </alternativeName>
    <alternativeName>
        <fullName>Rotamase</fullName>
    </alternativeName>
</protein>
<proteinExistence type="evidence at protein level"/>